<comment type="function">
    <text evidence="1">Together with its co-chaperonin GroES, plays an essential role in assisting protein folding. The GroEL-GroES system forms a nano-cage that allows encapsulation of the non-native substrate proteins and provides a physical environment optimized to promote and accelerate protein folding.</text>
</comment>
<comment type="catalytic activity">
    <reaction evidence="1">
        <text>ATP + H2O + a folded polypeptide = ADP + phosphate + an unfolded polypeptide.</text>
        <dbReference type="EC" id="5.6.1.7"/>
    </reaction>
</comment>
<comment type="subunit">
    <text evidence="1">Forms a cylinder of 14 subunits composed of two heptameric rings stacked back-to-back. Interacts with the co-chaperonin GroES.</text>
</comment>
<comment type="subcellular location">
    <subcellularLocation>
        <location evidence="1">Cytoplasm</location>
    </subcellularLocation>
</comment>
<comment type="similarity">
    <text evidence="1">Belongs to the chaperonin (HSP60) family.</text>
</comment>
<organism>
    <name type="scientific">Paramagnetospirillum magneticum (strain ATCC 700264 / AMB-1)</name>
    <name type="common">Magnetospirillum magneticum</name>
    <dbReference type="NCBI Taxonomy" id="342108"/>
    <lineage>
        <taxon>Bacteria</taxon>
        <taxon>Pseudomonadati</taxon>
        <taxon>Pseudomonadota</taxon>
        <taxon>Alphaproteobacteria</taxon>
        <taxon>Rhodospirillales</taxon>
        <taxon>Magnetospirillaceae</taxon>
        <taxon>Paramagnetospirillum</taxon>
    </lineage>
</organism>
<name>CH60_PARM1</name>
<evidence type="ECO:0000255" key="1">
    <source>
        <dbReference type="HAMAP-Rule" id="MF_00600"/>
    </source>
</evidence>
<accession>Q2WAW8</accession>
<sequence length="552" mass="57845">MAAKEVKFSTDARTRMLRGVDILADAVKVTLGPKGRNVVIEKSFGAPRITKDGVTVAKEIELADKFENMGAQMVREVASKTADLAGDGTTTATVLAQAIVREGVKAVAAGLNPMDLKRGVDLAVAAVVADVKSRSRKVATNAEIAQVGTISANGEKEIGDMIAKAMEKVGNEGVITVEEAKGLDTELDVVEGMQFDRGYTSPYFVTNAEKMTVELDNPYILLHEKKLSGLQPLLPVLEQVVQSGRPLVIIAEDIEGEALATLVVNKLRGGLKVAAVKAPGFGDRRKAMLEDIAILTGGQVISEDLGIKLESVNLEMLGTSKRITITKEDTTIVDGSGDKGAIDARCKQIRAQVEETTSDYDREKLQERLAKLAGGVAVIKVGGGSEIEVKERKDRVDDALHATRAAVEEGIVPGGGVALLHAVKALEGLASGNADQEVGISIVRRALQAPVRQIAENAGHDGAVVAGKIGESKDLSFGFDAQTGIYTDMIKAGIIDPTKVVRTALQDAASVAGLLITTEAMIAERPKKDAGGMPGGDMGGMGGMGGMGGMDF</sequence>
<reference key="1">
    <citation type="journal article" date="2005" name="DNA Res.">
        <title>Complete genome sequence of the facultative anaerobic magnetotactic bacterium Magnetospirillum sp. strain AMB-1.</title>
        <authorList>
            <person name="Matsunaga T."/>
            <person name="Okamura Y."/>
            <person name="Fukuda Y."/>
            <person name="Wahyudi A.T."/>
            <person name="Murase Y."/>
            <person name="Takeyama H."/>
        </authorList>
    </citation>
    <scope>NUCLEOTIDE SEQUENCE [LARGE SCALE GENOMIC DNA]</scope>
    <source>
        <strain>ATCC 700264 / AMB-1</strain>
    </source>
</reference>
<protein>
    <recommendedName>
        <fullName evidence="1">Chaperonin GroEL</fullName>
        <ecNumber evidence="1">5.6.1.7</ecNumber>
    </recommendedName>
    <alternativeName>
        <fullName evidence="1">60 kDa chaperonin</fullName>
    </alternativeName>
    <alternativeName>
        <fullName evidence="1">Chaperonin-60</fullName>
        <shortName evidence="1">Cpn60</shortName>
    </alternativeName>
</protein>
<dbReference type="EC" id="5.6.1.7" evidence="1"/>
<dbReference type="EMBL" id="AP007255">
    <property type="protein sequence ID" value="BAE49007.1"/>
    <property type="molecule type" value="Genomic_DNA"/>
</dbReference>
<dbReference type="RefSeq" id="WP_011382650.1">
    <property type="nucleotide sequence ID" value="NC_007626.1"/>
</dbReference>
<dbReference type="SMR" id="Q2WAW8"/>
<dbReference type="STRING" id="342108.amb0203"/>
<dbReference type="KEGG" id="mag:amb0203"/>
<dbReference type="HOGENOM" id="CLU_016503_3_0_5"/>
<dbReference type="OrthoDB" id="9766614at2"/>
<dbReference type="Proteomes" id="UP000007058">
    <property type="component" value="Chromosome"/>
</dbReference>
<dbReference type="GO" id="GO:0005737">
    <property type="term" value="C:cytoplasm"/>
    <property type="evidence" value="ECO:0007669"/>
    <property type="project" value="UniProtKB-SubCell"/>
</dbReference>
<dbReference type="GO" id="GO:0005524">
    <property type="term" value="F:ATP binding"/>
    <property type="evidence" value="ECO:0007669"/>
    <property type="project" value="UniProtKB-UniRule"/>
</dbReference>
<dbReference type="GO" id="GO:0140662">
    <property type="term" value="F:ATP-dependent protein folding chaperone"/>
    <property type="evidence" value="ECO:0007669"/>
    <property type="project" value="InterPro"/>
</dbReference>
<dbReference type="GO" id="GO:0016853">
    <property type="term" value="F:isomerase activity"/>
    <property type="evidence" value="ECO:0007669"/>
    <property type="project" value="UniProtKB-KW"/>
</dbReference>
<dbReference type="GO" id="GO:0051082">
    <property type="term" value="F:unfolded protein binding"/>
    <property type="evidence" value="ECO:0007669"/>
    <property type="project" value="UniProtKB-UniRule"/>
</dbReference>
<dbReference type="GO" id="GO:0042026">
    <property type="term" value="P:protein refolding"/>
    <property type="evidence" value="ECO:0007669"/>
    <property type="project" value="UniProtKB-UniRule"/>
</dbReference>
<dbReference type="CDD" id="cd03344">
    <property type="entry name" value="GroEL"/>
    <property type="match status" value="1"/>
</dbReference>
<dbReference type="FunFam" id="1.10.560.10:FF:000001">
    <property type="entry name" value="60 kDa chaperonin"/>
    <property type="match status" value="1"/>
</dbReference>
<dbReference type="FunFam" id="3.50.7.10:FF:000001">
    <property type="entry name" value="60 kDa chaperonin"/>
    <property type="match status" value="1"/>
</dbReference>
<dbReference type="Gene3D" id="3.50.7.10">
    <property type="entry name" value="GroEL"/>
    <property type="match status" value="1"/>
</dbReference>
<dbReference type="Gene3D" id="1.10.560.10">
    <property type="entry name" value="GroEL-like equatorial domain"/>
    <property type="match status" value="1"/>
</dbReference>
<dbReference type="Gene3D" id="3.30.260.10">
    <property type="entry name" value="TCP-1-like chaperonin intermediate domain"/>
    <property type="match status" value="1"/>
</dbReference>
<dbReference type="HAMAP" id="MF_00600">
    <property type="entry name" value="CH60"/>
    <property type="match status" value="1"/>
</dbReference>
<dbReference type="InterPro" id="IPR018370">
    <property type="entry name" value="Chaperonin_Cpn60_CS"/>
</dbReference>
<dbReference type="InterPro" id="IPR001844">
    <property type="entry name" value="Cpn60/GroEL"/>
</dbReference>
<dbReference type="InterPro" id="IPR002423">
    <property type="entry name" value="Cpn60/GroEL/TCP-1"/>
</dbReference>
<dbReference type="InterPro" id="IPR027409">
    <property type="entry name" value="GroEL-like_apical_dom_sf"/>
</dbReference>
<dbReference type="InterPro" id="IPR027413">
    <property type="entry name" value="GROEL-like_equatorial_sf"/>
</dbReference>
<dbReference type="InterPro" id="IPR027410">
    <property type="entry name" value="TCP-1-like_intermed_sf"/>
</dbReference>
<dbReference type="NCBIfam" id="TIGR02348">
    <property type="entry name" value="GroEL"/>
    <property type="match status" value="1"/>
</dbReference>
<dbReference type="NCBIfam" id="NF000592">
    <property type="entry name" value="PRK00013.1"/>
    <property type="match status" value="1"/>
</dbReference>
<dbReference type="NCBIfam" id="NF009487">
    <property type="entry name" value="PRK12849.1"/>
    <property type="match status" value="1"/>
</dbReference>
<dbReference type="NCBIfam" id="NF009488">
    <property type="entry name" value="PRK12850.1"/>
    <property type="match status" value="1"/>
</dbReference>
<dbReference type="NCBIfam" id="NF009489">
    <property type="entry name" value="PRK12851.1"/>
    <property type="match status" value="1"/>
</dbReference>
<dbReference type="PANTHER" id="PTHR45633">
    <property type="entry name" value="60 KDA HEAT SHOCK PROTEIN, MITOCHONDRIAL"/>
    <property type="match status" value="1"/>
</dbReference>
<dbReference type="Pfam" id="PF00118">
    <property type="entry name" value="Cpn60_TCP1"/>
    <property type="match status" value="1"/>
</dbReference>
<dbReference type="PRINTS" id="PR00298">
    <property type="entry name" value="CHAPERONIN60"/>
</dbReference>
<dbReference type="SUPFAM" id="SSF52029">
    <property type="entry name" value="GroEL apical domain-like"/>
    <property type="match status" value="1"/>
</dbReference>
<dbReference type="SUPFAM" id="SSF48592">
    <property type="entry name" value="GroEL equatorial domain-like"/>
    <property type="match status" value="1"/>
</dbReference>
<dbReference type="SUPFAM" id="SSF54849">
    <property type="entry name" value="GroEL-intermediate domain like"/>
    <property type="match status" value="1"/>
</dbReference>
<dbReference type="PROSITE" id="PS00296">
    <property type="entry name" value="CHAPERONINS_CPN60"/>
    <property type="match status" value="1"/>
</dbReference>
<proteinExistence type="inferred from homology"/>
<feature type="chain" id="PRO_0000256924" description="Chaperonin GroEL">
    <location>
        <begin position="1"/>
        <end position="552"/>
    </location>
</feature>
<feature type="binding site" evidence="1">
    <location>
        <begin position="30"/>
        <end position="33"/>
    </location>
    <ligand>
        <name>ATP</name>
        <dbReference type="ChEBI" id="CHEBI:30616"/>
    </ligand>
</feature>
<feature type="binding site" evidence="1">
    <location>
        <position position="51"/>
    </location>
    <ligand>
        <name>ATP</name>
        <dbReference type="ChEBI" id="CHEBI:30616"/>
    </ligand>
</feature>
<feature type="binding site" evidence="1">
    <location>
        <begin position="87"/>
        <end position="91"/>
    </location>
    <ligand>
        <name>ATP</name>
        <dbReference type="ChEBI" id="CHEBI:30616"/>
    </ligand>
</feature>
<feature type="binding site" evidence="1">
    <location>
        <position position="415"/>
    </location>
    <ligand>
        <name>ATP</name>
        <dbReference type="ChEBI" id="CHEBI:30616"/>
    </ligand>
</feature>
<feature type="binding site" evidence="1">
    <location>
        <position position="496"/>
    </location>
    <ligand>
        <name>ATP</name>
        <dbReference type="ChEBI" id="CHEBI:30616"/>
    </ligand>
</feature>
<keyword id="KW-0067">ATP-binding</keyword>
<keyword id="KW-0143">Chaperone</keyword>
<keyword id="KW-0963">Cytoplasm</keyword>
<keyword id="KW-0413">Isomerase</keyword>
<keyword id="KW-0547">Nucleotide-binding</keyword>
<gene>
    <name evidence="1" type="primary">groEL</name>
    <name evidence="1" type="synonym">groL</name>
    <name type="ordered locus">amb0203</name>
</gene>